<name>SHL2B_HUMAN</name>
<comment type="subcellular location">
    <subcellularLocation>
        <location evidence="2">Membrane</location>
        <topology evidence="2">Single-pass membrane protein</topology>
    </subcellularLocation>
</comment>
<comment type="similarity">
    <text evidence="2">Belongs to the shisa family.</text>
</comment>
<evidence type="ECO:0000255" key="1"/>
<evidence type="ECO:0000305" key="2"/>
<evidence type="ECO:0000312" key="3">
    <source>
        <dbReference type="HGNC" id="HGNC:34236"/>
    </source>
</evidence>
<proteinExistence type="evidence at protein level"/>
<feature type="chain" id="PRO_0000317723" description="Protein shisa-like-2B">
    <location>
        <begin position="1"/>
        <end position="160"/>
    </location>
</feature>
<feature type="transmembrane region" description="Helical" evidence="1">
    <location>
        <begin position="65"/>
        <end position="85"/>
    </location>
</feature>
<feature type="sequence variant" id="VAR_053995" description="In dbSNP:rs16893053.">
    <original>S</original>
    <variation>R</variation>
    <location>
        <position position="5"/>
    </location>
</feature>
<feature type="sequence variant" id="VAR_053996" description="In dbSNP:rs2305962.">
    <original>A</original>
    <variation>P</variation>
    <location>
        <position position="111"/>
    </location>
</feature>
<dbReference type="EMBL" id="AC008898">
    <property type="status" value="NOT_ANNOTATED_CDS"/>
    <property type="molecule type" value="Genomic_DNA"/>
</dbReference>
<dbReference type="CCDS" id="CCDS47220.1"/>
<dbReference type="RefSeq" id="NP_001157914.1">
    <property type="nucleotide sequence ID" value="NM_001164442.2"/>
</dbReference>
<dbReference type="SMR" id="A6NKW6"/>
<dbReference type="STRING" id="9606.ENSP00000373726"/>
<dbReference type="GlyGen" id="A6NKW6">
    <property type="glycosylation" value="1 site, 5 N-linked glycans (1 site)"/>
</dbReference>
<dbReference type="iPTMnet" id="A6NKW6"/>
<dbReference type="PhosphoSitePlus" id="A6NKW6"/>
<dbReference type="BioMuta" id="FAM159B"/>
<dbReference type="MassIVE" id="A6NKW6"/>
<dbReference type="PaxDb" id="9606-ENSP00000373726"/>
<dbReference type="PeptideAtlas" id="A6NKW6"/>
<dbReference type="Antibodypedia" id="2195">
    <property type="antibodies" value="25 antibodies from 12 providers"/>
</dbReference>
<dbReference type="DNASU" id="100132916"/>
<dbReference type="Ensembl" id="ENST00000389074.6">
    <property type="protein sequence ID" value="ENSP00000373726.5"/>
    <property type="gene ID" value="ENSG00000145642.12"/>
</dbReference>
<dbReference type="GeneID" id="100132916"/>
<dbReference type="KEGG" id="hsa:100132916"/>
<dbReference type="MANE-Select" id="ENST00000389074.6">
    <property type="protein sequence ID" value="ENSP00000373726.5"/>
    <property type="RefSeq nucleotide sequence ID" value="NM_001164442.2"/>
    <property type="RefSeq protein sequence ID" value="NP_001157914.1"/>
</dbReference>
<dbReference type="UCSC" id="uc021xzg.2">
    <property type="organism name" value="human"/>
</dbReference>
<dbReference type="AGR" id="HGNC:34236"/>
<dbReference type="CTD" id="100132916"/>
<dbReference type="DisGeNET" id="100132916"/>
<dbReference type="GeneCards" id="SHISAL2B"/>
<dbReference type="HGNC" id="HGNC:34236">
    <property type="gene designation" value="SHISAL2B"/>
</dbReference>
<dbReference type="HPA" id="ENSG00000145642">
    <property type="expression patterns" value="Group enriched (brain, pancreas, stomach)"/>
</dbReference>
<dbReference type="MIM" id="620219">
    <property type="type" value="gene"/>
</dbReference>
<dbReference type="neXtProt" id="NX_A6NKW6"/>
<dbReference type="OpenTargets" id="ENSG00000145642"/>
<dbReference type="PharmGKB" id="PA162386728"/>
<dbReference type="VEuPathDB" id="HostDB:ENSG00000145642"/>
<dbReference type="eggNOG" id="ENOG502S1JE">
    <property type="taxonomic scope" value="Eukaryota"/>
</dbReference>
<dbReference type="GeneTree" id="ENSGT00940000161622"/>
<dbReference type="HOGENOM" id="CLU_140078_0_0_1"/>
<dbReference type="InParanoid" id="A6NKW6"/>
<dbReference type="OMA" id="RYCCGFA"/>
<dbReference type="OrthoDB" id="10062839at2759"/>
<dbReference type="PAN-GO" id="A6NKW6">
    <property type="GO annotations" value="0 GO annotations based on evolutionary models"/>
</dbReference>
<dbReference type="PhylomeDB" id="A6NKW6"/>
<dbReference type="TreeFam" id="TF335848"/>
<dbReference type="PathwayCommons" id="A6NKW6"/>
<dbReference type="BioGRID-ORCS" id="100132916">
    <property type="hits" value="10 hits in 1133 CRISPR screens"/>
</dbReference>
<dbReference type="GenomeRNAi" id="100132916"/>
<dbReference type="Pharos" id="A6NKW6">
    <property type="development level" value="Tdark"/>
</dbReference>
<dbReference type="PRO" id="PR:A6NKW6"/>
<dbReference type="Proteomes" id="UP000005640">
    <property type="component" value="Chromosome 5"/>
</dbReference>
<dbReference type="RNAct" id="A6NKW6">
    <property type="molecule type" value="protein"/>
</dbReference>
<dbReference type="Bgee" id="ENSG00000145642">
    <property type="expression patterns" value="Expressed in islet of Langerhans and 77 other cell types or tissues"/>
</dbReference>
<dbReference type="ExpressionAtlas" id="A6NKW6">
    <property type="expression patterns" value="baseline and differential"/>
</dbReference>
<dbReference type="GO" id="GO:0016020">
    <property type="term" value="C:membrane"/>
    <property type="evidence" value="ECO:0007669"/>
    <property type="project" value="UniProtKB-SubCell"/>
</dbReference>
<dbReference type="InterPro" id="IPR026910">
    <property type="entry name" value="Shisa"/>
</dbReference>
<dbReference type="InterPro" id="IPR053891">
    <property type="entry name" value="Shisa_N"/>
</dbReference>
<dbReference type="PANTHER" id="PTHR31395:SF2">
    <property type="entry name" value="PROTEIN SHISA-LIKE-2B"/>
    <property type="match status" value="1"/>
</dbReference>
<dbReference type="PANTHER" id="PTHR31395">
    <property type="entry name" value="SHISA"/>
    <property type="match status" value="1"/>
</dbReference>
<dbReference type="Pfam" id="PF13908">
    <property type="entry name" value="Shisa_N"/>
    <property type="match status" value="1"/>
</dbReference>
<gene>
    <name evidence="3" type="primary">SHISAL2B</name>
    <name type="synonym">FAM159B</name>
</gene>
<accession>A6NKW6</accession>
<protein>
    <recommendedName>
        <fullName evidence="3">Protein shisa-like-2B</fullName>
    </recommendedName>
</protein>
<sequence>MSEASRLCSGYYSLNQSFVEPFQCPRRGEGAALQYCCGFADLKYCCSEPGSYFPYKHSYMWSLSIGALIGLGIAALVLLAFVISVCVLCYLFLYTKPQRLDTGLKLQHLEASSTQEGKSNGKTKALNSNAASNATNETYYEADDIIQEKTMDATQIHIAY</sequence>
<organism>
    <name type="scientific">Homo sapiens</name>
    <name type="common">Human</name>
    <dbReference type="NCBI Taxonomy" id="9606"/>
    <lineage>
        <taxon>Eukaryota</taxon>
        <taxon>Metazoa</taxon>
        <taxon>Chordata</taxon>
        <taxon>Craniata</taxon>
        <taxon>Vertebrata</taxon>
        <taxon>Euteleostomi</taxon>
        <taxon>Mammalia</taxon>
        <taxon>Eutheria</taxon>
        <taxon>Euarchontoglires</taxon>
        <taxon>Primates</taxon>
        <taxon>Haplorrhini</taxon>
        <taxon>Catarrhini</taxon>
        <taxon>Hominidae</taxon>
        <taxon>Homo</taxon>
    </lineage>
</organism>
<keyword id="KW-0472">Membrane</keyword>
<keyword id="KW-1267">Proteomics identification</keyword>
<keyword id="KW-1185">Reference proteome</keyword>
<keyword id="KW-0812">Transmembrane</keyword>
<keyword id="KW-1133">Transmembrane helix</keyword>
<reference key="1">
    <citation type="journal article" date="2004" name="Nature">
        <title>The DNA sequence and comparative analysis of human chromosome 5.</title>
        <authorList>
            <person name="Schmutz J."/>
            <person name="Martin J."/>
            <person name="Terry A."/>
            <person name="Couronne O."/>
            <person name="Grimwood J."/>
            <person name="Lowry S."/>
            <person name="Gordon L.A."/>
            <person name="Scott D."/>
            <person name="Xie G."/>
            <person name="Huang W."/>
            <person name="Hellsten U."/>
            <person name="Tran-Gyamfi M."/>
            <person name="She X."/>
            <person name="Prabhakar S."/>
            <person name="Aerts A."/>
            <person name="Altherr M."/>
            <person name="Bajorek E."/>
            <person name="Black S."/>
            <person name="Branscomb E."/>
            <person name="Caoile C."/>
            <person name="Challacombe J.F."/>
            <person name="Chan Y.M."/>
            <person name="Denys M."/>
            <person name="Detter J.C."/>
            <person name="Escobar J."/>
            <person name="Flowers D."/>
            <person name="Fotopulos D."/>
            <person name="Glavina T."/>
            <person name="Gomez M."/>
            <person name="Gonzales E."/>
            <person name="Goodstein D."/>
            <person name="Grigoriev I."/>
            <person name="Groza M."/>
            <person name="Hammon N."/>
            <person name="Hawkins T."/>
            <person name="Haydu L."/>
            <person name="Israni S."/>
            <person name="Jett J."/>
            <person name="Kadner K."/>
            <person name="Kimball H."/>
            <person name="Kobayashi A."/>
            <person name="Lopez F."/>
            <person name="Lou Y."/>
            <person name="Martinez D."/>
            <person name="Medina C."/>
            <person name="Morgan J."/>
            <person name="Nandkeshwar R."/>
            <person name="Noonan J.P."/>
            <person name="Pitluck S."/>
            <person name="Pollard M."/>
            <person name="Predki P."/>
            <person name="Priest J."/>
            <person name="Ramirez L."/>
            <person name="Retterer J."/>
            <person name="Rodriguez A."/>
            <person name="Rogers S."/>
            <person name="Salamov A."/>
            <person name="Salazar A."/>
            <person name="Thayer N."/>
            <person name="Tice H."/>
            <person name="Tsai M."/>
            <person name="Ustaszewska A."/>
            <person name="Vo N."/>
            <person name="Wheeler J."/>
            <person name="Wu K."/>
            <person name="Yang J."/>
            <person name="Dickson M."/>
            <person name="Cheng J.-F."/>
            <person name="Eichler E.E."/>
            <person name="Olsen A."/>
            <person name="Pennacchio L.A."/>
            <person name="Rokhsar D.S."/>
            <person name="Richardson P."/>
            <person name="Lucas S.M."/>
            <person name="Myers R.M."/>
            <person name="Rubin E.M."/>
        </authorList>
    </citation>
    <scope>NUCLEOTIDE SEQUENCE [LARGE SCALE GENOMIC DNA]</scope>
</reference>